<gene>
    <name type="primary">Mocos</name>
</gene>
<keyword id="KW-0501">Molybdenum cofactor biosynthesis</keyword>
<keyword id="KW-0597">Phosphoprotein</keyword>
<keyword id="KW-0663">Pyridoxal phosphate</keyword>
<keyword id="KW-1185">Reference proteome</keyword>
<keyword id="KW-0808">Transferase</keyword>
<protein>
    <recommendedName>
        <fullName evidence="2">Molybdenum cofactor sulfurase</fullName>
        <shortName evidence="2">MCS</shortName>
        <shortName evidence="2">MOS</shortName>
        <shortName evidence="2">MoCo sulfurase</shortName>
        <ecNumber evidence="2">2.8.1.9</ecNumber>
    </recommendedName>
    <alternativeName>
        <fullName evidence="2">Molybdenum cofactor sulfurtransferase</fullName>
    </alternativeName>
</protein>
<sequence length="862" mass="95013">MACGAAERGPEPPAFQRHLEASTQRLAHGYGLRSMSELRDQEFGRLAGTVYLDHAGATLFPQSQLTNFTKDLMENVYGNPHSQNITSKLTHDTVEQVRYRILTHFHTTPEDYIVIFTAGSTAALRLVAEAFPWVSRSPENSGSHFCYLTDNHTSVVGMRKVAAAMSVTSIPVKPEDMWSAEGKDAGACDPDCQLPHLFCYPAQSNFSGTRYPLSWVEEVKSGRRSPVNAPGKWFVLLDAASYVSTSPLDLSAHQADFIPISFYKIFGLPTGLGALLVNKHVAPLLRKGYFGGGTAAAYLAGEDFYVPRSSVAERFEDGTISFLDVIALKHGFDALEHLTGGMVNIQQHTFALVQYTHSALSSLRYLNGAPVVRIYSDSEFSSPDVQGPIINFNVLDDGGKIIGYSQVDKMASLYNIHLRTGCFCNLGACQRHLGLSDEMVKKHFQAGHVCGDDVDIIDGRPTGSVRISFGYMSTLEDAQAFLRFISTIYLRSPSDQPVPQASISDAGALTSKSDCHSPQEGSCTDPSVCNGSYPDTNIMDLHPSLSKASSAQQTPQDKAAGILNGDPGSHIVTNIYLYPIKSCAAFEVTKWPVGSQGLLYDRSWMVVNHNGICMSQKQEPRLCLIQPFIDLQQRIMVIKAEGMEPIQVPLEEDGEQTQICQSRVCADRVNTYDCGENVSRWLSKFLGRLCHLIKQSPHFQRNARKTPKKGQPPGTTVALSLVNEAQYLLVNTSSILELQRQLNASDEHGKEESFSMKDLISRFRANIITKGARAFEEEKWDEISIGSLHFQVLGPCHRCQMICINQQTGQRNQDVFQTLSESRGRKVNFGVYLMHSYLDLSSPCFLSVGSEVLPVLKDCGVS</sequence>
<accession>Q14CH1</accession>
<comment type="function">
    <text evidence="2">Sulfurates the molybdenum cofactor. Sulfation of molybdenum is essential for xanthine dehydrogenase (XDH) and aldehyde oxidase (ADO) enzymes in which molybdenum cofactor is liganded by 1 oxygen and 1 sulfur atom in active form.</text>
</comment>
<comment type="catalytic activity">
    <reaction evidence="2">
        <text>Mo-molybdopterin + L-cysteine + AH2 = thio-Mo-molybdopterin + L-alanine + A + H2O</text>
        <dbReference type="Rhea" id="RHEA:42636"/>
        <dbReference type="ChEBI" id="CHEBI:13193"/>
        <dbReference type="ChEBI" id="CHEBI:15377"/>
        <dbReference type="ChEBI" id="CHEBI:17499"/>
        <dbReference type="ChEBI" id="CHEBI:35235"/>
        <dbReference type="ChEBI" id="CHEBI:57972"/>
        <dbReference type="ChEBI" id="CHEBI:71302"/>
        <dbReference type="ChEBI" id="CHEBI:82685"/>
        <dbReference type="EC" id="2.8.1.9"/>
    </reaction>
</comment>
<comment type="cofactor">
    <cofactor evidence="2">
        <name>pyridoxal 5'-phosphate</name>
        <dbReference type="ChEBI" id="CHEBI:597326"/>
    </cofactor>
</comment>
<comment type="pathway">
    <text evidence="1">Cofactor biosynthesis; molybdopterin biosynthesis.</text>
</comment>
<comment type="similarity">
    <text evidence="2">Belongs to the class-V pyridoxal-phosphate-dependent aminotransferase family. MOCOS subfamily.</text>
</comment>
<organism>
    <name type="scientific">Mus musculus</name>
    <name type="common">Mouse</name>
    <dbReference type="NCBI Taxonomy" id="10090"/>
    <lineage>
        <taxon>Eukaryota</taxon>
        <taxon>Metazoa</taxon>
        <taxon>Chordata</taxon>
        <taxon>Craniata</taxon>
        <taxon>Vertebrata</taxon>
        <taxon>Euteleostomi</taxon>
        <taxon>Mammalia</taxon>
        <taxon>Eutheria</taxon>
        <taxon>Euarchontoglires</taxon>
        <taxon>Glires</taxon>
        <taxon>Rodentia</taxon>
        <taxon>Myomorpha</taxon>
        <taxon>Muroidea</taxon>
        <taxon>Muridae</taxon>
        <taxon>Murinae</taxon>
        <taxon>Mus</taxon>
        <taxon>Mus</taxon>
    </lineage>
</organism>
<proteinExistence type="evidence at protein level"/>
<feature type="chain" id="PRO_0000249953" description="Molybdenum cofactor sulfurase">
    <location>
        <begin position="1"/>
        <end position="862"/>
    </location>
</feature>
<feature type="domain" description="MOSC" evidence="2">
    <location>
        <begin position="704"/>
        <end position="855"/>
    </location>
</feature>
<feature type="active site" evidence="2">
    <location>
        <position position="424"/>
    </location>
</feature>
<feature type="modified residue" description="Phosphoserine" evidence="1">
    <location>
        <position position="34"/>
    </location>
</feature>
<feature type="modified residue" description="N6-(pyridoxal phosphate)lysine" evidence="2">
    <location>
        <position position="264"/>
    </location>
</feature>
<feature type="modified residue" description="Phosphoserine" evidence="1">
    <location>
        <position position="517"/>
    </location>
</feature>
<name>MOCOS_MOUSE</name>
<dbReference type="EC" id="2.8.1.9" evidence="2"/>
<dbReference type="EMBL" id="BC113180">
    <property type="protein sequence ID" value="AAI13181.1"/>
    <property type="molecule type" value="mRNA"/>
</dbReference>
<dbReference type="EMBL" id="BC113786">
    <property type="protein sequence ID" value="AAI13787.1"/>
    <property type="molecule type" value="mRNA"/>
</dbReference>
<dbReference type="CCDS" id="CCDS37750.1"/>
<dbReference type="RefSeq" id="NP_081055.1">
    <property type="nucleotide sequence ID" value="NM_026779.1"/>
</dbReference>
<dbReference type="SMR" id="Q14CH1"/>
<dbReference type="BioGRID" id="212940">
    <property type="interactions" value="8"/>
</dbReference>
<dbReference type="FunCoup" id="Q14CH1">
    <property type="interactions" value="65"/>
</dbReference>
<dbReference type="IntAct" id="Q14CH1">
    <property type="interactions" value="1"/>
</dbReference>
<dbReference type="STRING" id="10090.ENSMUSP00000063609"/>
<dbReference type="iPTMnet" id="Q14CH1"/>
<dbReference type="PhosphoSitePlus" id="Q14CH1"/>
<dbReference type="jPOST" id="Q14CH1"/>
<dbReference type="PaxDb" id="10090-ENSMUSP00000063609"/>
<dbReference type="PeptideAtlas" id="Q14CH1"/>
<dbReference type="ProteomicsDB" id="290091"/>
<dbReference type="Pumba" id="Q14CH1"/>
<dbReference type="Antibodypedia" id="41960">
    <property type="antibodies" value="49 antibodies from 18 providers"/>
</dbReference>
<dbReference type="Ensembl" id="ENSMUST00000068006.9">
    <property type="protein sequence ID" value="ENSMUSP00000063609.8"/>
    <property type="gene ID" value="ENSMUSG00000039616.11"/>
</dbReference>
<dbReference type="GeneID" id="68591"/>
<dbReference type="KEGG" id="mmu:68591"/>
<dbReference type="UCSC" id="uc008egy.1">
    <property type="organism name" value="mouse"/>
</dbReference>
<dbReference type="AGR" id="MGI:1915841"/>
<dbReference type="CTD" id="55034"/>
<dbReference type="MGI" id="MGI:1915841">
    <property type="gene designation" value="Mocos"/>
</dbReference>
<dbReference type="VEuPathDB" id="HostDB:ENSMUSG00000039616"/>
<dbReference type="eggNOG" id="KOG2142">
    <property type="taxonomic scope" value="Eukaryota"/>
</dbReference>
<dbReference type="GeneTree" id="ENSGT00940000157051"/>
<dbReference type="HOGENOM" id="CLU_010913_0_1_1"/>
<dbReference type="InParanoid" id="Q14CH1"/>
<dbReference type="OMA" id="PCTRCQM"/>
<dbReference type="OrthoDB" id="420046at2759"/>
<dbReference type="PhylomeDB" id="Q14CH1"/>
<dbReference type="TreeFam" id="TF105761"/>
<dbReference type="Reactome" id="R-MMU-947581">
    <property type="pathway name" value="Molybdenum cofactor biosynthesis"/>
</dbReference>
<dbReference type="UniPathway" id="UPA00344"/>
<dbReference type="BioGRID-ORCS" id="68591">
    <property type="hits" value="2 hits in 78 CRISPR screens"/>
</dbReference>
<dbReference type="ChiTaRS" id="Mocos">
    <property type="organism name" value="mouse"/>
</dbReference>
<dbReference type="PRO" id="PR:Q14CH1"/>
<dbReference type="Proteomes" id="UP000000589">
    <property type="component" value="Chromosome 18"/>
</dbReference>
<dbReference type="RNAct" id="Q14CH1">
    <property type="molecule type" value="protein"/>
</dbReference>
<dbReference type="Bgee" id="ENSMUSG00000039616">
    <property type="expression patterns" value="Expressed in granulocyte and 152 other cell types or tissues"/>
</dbReference>
<dbReference type="GO" id="GO:0016829">
    <property type="term" value="F:lyase activity"/>
    <property type="evidence" value="ECO:0007669"/>
    <property type="project" value="UniProtKB-UniRule"/>
</dbReference>
<dbReference type="GO" id="GO:0008265">
    <property type="term" value="F:molybdenum cofactor sulfurtransferase activity"/>
    <property type="evidence" value="ECO:0000250"/>
    <property type="project" value="UniProtKB"/>
</dbReference>
<dbReference type="GO" id="GO:0030151">
    <property type="term" value="F:molybdenum ion binding"/>
    <property type="evidence" value="ECO:0007669"/>
    <property type="project" value="UniProtKB-UniRule"/>
</dbReference>
<dbReference type="GO" id="GO:0030170">
    <property type="term" value="F:pyridoxal phosphate binding"/>
    <property type="evidence" value="ECO:0007669"/>
    <property type="project" value="UniProtKB-UniRule"/>
</dbReference>
<dbReference type="GO" id="GO:0006777">
    <property type="term" value="P:Mo-molybdopterin cofactor biosynthetic process"/>
    <property type="evidence" value="ECO:0007669"/>
    <property type="project" value="UniProtKB-UniRule"/>
</dbReference>
<dbReference type="GO" id="GO:0032324">
    <property type="term" value="P:molybdopterin cofactor biosynthetic process"/>
    <property type="evidence" value="ECO:0000315"/>
    <property type="project" value="MGI"/>
</dbReference>
<dbReference type="GO" id="GO:0043545">
    <property type="term" value="P:molybdopterin cofactor metabolic process"/>
    <property type="evidence" value="ECO:0000250"/>
    <property type="project" value="UniProtKB"/>
</dbReference>
<dbReference type="FunFam" id="3.40.640.10:FF:000096">
    <property type="entry name" value="Molybdenum cofactor sulfurase"/>
    <property type="match status" value="1"/>
</dbReference>
<dbReference type="Gene3D" id="3.40.640.10">
    <property type="entry name" value="Type I PLP-dependent aspartate aminotransferase-like (Major domain)"/>
    <property type="match status" value="1"/>
</dbReference>
<dbReference type="HAMAP" id="MF_03050">
    <property type="entry name" value="MOCOS"/>
    <property type="match status" value="1"/>
</dbReference>
<dbReference type="InterPro" id="IPR000192">
    <property type="entry name" value="Aminotrans_V_dom"/>
</dbReference>
<dbReference type="InterPro" id="IPR005302">
    <property type="entry name" value="MoCF_Sase_C"/>
</dbReference>
<dbReference type="InterPro" id="IPR028886">
    <property type="entry name" value="MoCo_sulfurase"/>
</dbReference>
<dbReference type="InterPro" id="IPR005303">
    <property type="entry name" value="MOCOS_middle"/>
</dbReference>
<dbReference type="InterPro" id="IPR015424">
    <property type="entry name" value="PyrdxlP-dep_Trfase"/>
</dbReference>
<dbReference type="InterPro" id="IPR015421">
    <property type="entry name" value="PyrdxlP-dep_Trfase_major"/>
</dbReference>
<dbReference type="InterPro" id="IPR011037">
    <property type="entry name" value="Pyrv_Knase-like_insert_dom_sf"/>
</dbReference>
<dbReference type="PANTHER" id="PTHR14237:SF19">
    <property type="entry name" value="MITOCHONDRIAL AMIDOXIME REDUCING COMPONENT 1"/>
    <property type="match status" value="1"/>
</dbReference>
<dbReference type="PANTHER" id="PTHR14237">
    <property type="entry name" value="MOLYBDOPTERIN COFACTOR SULFURASE MOSC"/>
    <property type="match status" value="1"/>
</dbReference>
<dbReference type="Pfam" id="PF00266">
    <property type="entry name" value="Aminotran_5"/>
    <property type="match status" value="1"/>
</dbReference>
<dbReference type="Pfam" id="PF03473">
    <property type="entry name" value="MOSC"/>
    <property type="match status" value="1"/>
</dbReference>
<dbReference type="Pfam" id="PF03476">
    <property type="entry name" value="MOSC_N"/>
    <property type="match status" value="1"/>
</dbReference>
<dbReference type="SUPFAM" id="SSF141673">
    <property type="entry name" value="MOSC N-terminal domain-like"/>
    <property type="match status" value="1"/>
</dbReference>
<dbReference type="SUPFAM" id="SSF50800">
    <property type="entry name" value="PK beta-barrel domain-like"/>
    <property type="match status" value="1"/>
</dbReference>
<dbReference type="SUPFAM" id="SSF53383">
    <property type="entry name" value="PLP-dependent transferases"/>
    <property type="match status" value="1"/>
</dbReference>
<dbReference type="PROSITE" id="PS51340">
    <property type="entry name" value="MOSC"/>
    <property type="match status" value="1"/>
</dbReference>
<reference key="1">
    <citation type="journal article" date="2004" name="Genome Res.">
        <title>The status, quality, and expansion of the NIH full-length cDNA project: the Mammalian Gene Collection (MGC).</title>
        <authorList>
            <consortium name="The MGC Project Team"/>
        </authorList>
    </citation>
    <scope>NUCLEOTIDE SEQUENCE [LARGE SCALE MRNA]</scope>
</reference>
<reference key="2">
    <citation type="journal article" date="2010" name="Cell">
        <title>A tissue-specific atlas of mouse protein phosphorylation and expression.</title>
        <authorList>
            <person name="Huttlin E.L."/>
            <person name="Jedrychowski M.P."/>
            <person name="Elias J.E."/>
            <person name="Goswami T."/>
            <person name="Rad R."/>
            <person name="Beausoleil S.A."/>
            <person name="Villen J."/>
            <person name="Haas W."/>
            <person name="Sowa M.E."/>
            <person name="Gygi S.P."/>
        </authorList>
    </citation>
    <scope>IDENTIFICATION BY MASS SPECTROMETRY [LARGE SCALE ANALYSIS]</scope>
    <source>
        <tissue>Liver</tissue>
        <tissue>Lung</tissue>
    </source>
</reference>
<evidence type="ECO:0000250" key="1">
    <source>
        <dbReference type="UniProtKB" id="Q96EN8"/>
    </source>
</evidence>
<evidence type="ECO:0000255" key="2">
    <source>
        <dbReference type="HAMAP-Rule" id="MF_03050"/>
    </source>
</evidence>